<evidence type="ECO:0000255" key="1">
    <source>
        <dbReference type="HAMAP-Rule" id="MF_00564"/>
    </source>
</evidence>
<accession>B7L092</accession>
<name>RNPH_METC4</name>
<comment type="function">
    <text evidence="1">Phosphorolytic 3'-5' exoribonuclease that plays an important role in tRNA 3'-end maturation. Removes nucleotide residues following the 3'-CCA terminus of tRNAs; can also add nucleotides to the ends of RNA molecules by using nucleoside diphosphates as substrates, but this may not be physiologically important. Probably plays a role in initiation of 16S rRNA degradation (leading to ribosome degradation) during starvation.</text>
</comment>
<comment type="catalytic activity">
    <reaction evidence="1">
        <text>tRNA(n+1) + phosphate = tRNA(n) + a ribonucleoside 5'-diphosphate</text>
        <dbReference type="Rhea" id="RHEA:10628"/>
        <dbReference type="Rhea" id="RHEA-COMP:17343"/>
        <dbReference type="Rhea" id="RHEA-COMP:17344"/>
        <dbReference type="ChEBI" id="CHEBI:43474"/>
        <dbReference type="ChEBI" id="CHEBI:57930"/>
        <dbReference type="ChEBI" id="CHEBI:173114"/>
        <dbReference type="EC" id="2.7.7.56"/>
    </reaction>
</comment>
<comment type="subunit">
    <text evidence="1">Homohexameric ring arranged as a trimer of dimers.</text>
</comment>
<comment type="similarity">
    <text evidence="1">Belongs to the RNase PH family.</text>
</comment>
<proteinExistence type="inferred from homology"/>
<organism>
    <name type="scientific">Methylorubrum extorquens (strain CM4 / NCIMB 13688)</name>
    <name type="common">Methylobacterium extorquens</name>
    <dbReference type="NCBI Taxonomy" id="440085"/>
    <lineage>
        <taxon>Bacteria</taxon>
        <taxon>Pseudomonadati</taxon>
        <taxon>Pseudomonadota</taxon>
        <taxon>Alphaproteobacteria</taxon>
        <taxon>Hyphomicrobiales</taxon>
        <taxon>Methylobacteriaceae</taxon>
        <taxon>Methylorubrum</taxon>
    </lineage>
</organism>
<feature type="chain" id="PRO_1000146779" description="Ribonuclease PH">
    <location>
        <begin position="1"/>
        <end position="237"/>
    </location>
</feature>
<feature type="binding site" evidence="1">
    <location>
        <position position="86"/>
    </location>
    <ligand>
        <name>phosphate</name>
        <dbReference type="ChEBI" id="CHEBI:43474"/>
        <note>substrate</note>
    </ligand>
</feature>
<feature type="binding site" evidence="1">
    <location>
        <begin position="124"/>
        <end position="126"/>
    </location>
    <ligand>
        <name>phosphate</name>
        <dbReference type="ChEBI" id="CHEBI:43474"/>
        <note>substrate</note>
    </ligand>
</feature>
<sequence length="237" mass="25682">MRPSKRAADAMRDVTLERAVARYAEGSCLVTFGNTRVLCTASLEERGPPWLRGSGKGWVTAEYAMLPRATHERTRREVNSGKPSGRTQEIQRLIGRSLRAVTNLPALGERQITVDCDVIQADGGTRTASITGAWVALHDCFAWMRARSIISVDPLKDHVAAVSCGIYKGQPVLDLDYAEDSAAETDANFVVTGKGGIVEVQGTAELEPFTDEQFLELLRLAKGGVAGLVELQRKAIA</sequence>
<reference key="1">
    <citation type="submission" date="2008-12" db="EMBL/GenBank/DDBJ databases">
        <title>Complete sequence of chromosome of Methylobacterium chloromethanicum CM4.</title>
        <authorList>
            <consortium name="US DOE Joint Genome Institute"/>
            <person name="Lucas S."/>
            <person name="Copeland A."/>
            <person name="Lapidus A."/>
            <person name="Glavina del Rio T."/>
            <person name="Dalin E."/>
            <person name="Tice H."/>
            <person name="Bruce D."/>
            <person name="Goodwin L."/>
            <person name="Pitluck S."/>
            <person name="Chertkov O."/>
            <person name="Brettin T."/>
            <person name="Detter J.C."/>
            <person name="Han C."/>
            <person name="Larimer F."/>
            <person name="Land M."/>
            <person name="Hauser L."/>
            <person name="Kyrpides N."/>
            <person name="Mikhailova N."/>
            <person name="Marx C."/>
            <person name="Richardson P."/>
        </authorList>
    </citation>
    <scope>NUCLEOTIDE SEQUENCE [LARGE SCALE GENOMIC DNA]</scope>
    <source>
        <strain>CM4 / NCIMB 13688</strain>
    </source>
</reference>
<protein>
    <recommendedName>
        <fullName evidence="1">Ribonuclease PH</fullName>
        <shortName evidence="1">RNase PH</shortName>
        <ecNumber evidence="1">2.7.7.56</ecNumber>
    </recommendedName>
    <alternativeName>
        <fullName evidence="1">tRNA nucleotidyltransferase</fullName>
    </alternativeName>
</protein>
<keyword id="KW-0548">Nucleotidyltransferase</keyword>
<keyword id="KW-0694">RNA-binding</keyword>
<keyword id="KW-0698">rRNA processing</keyword>
<keyword id="KW-0808">Transferase</keyword>
<keyword id="KW-0819">tRNA processing</keyword>
<keyword id="KW-0820">tRNA-binding</keyword>
<dbReference type="EC" id="2.7.7.56" evidence="1"/>
<dbReference type="EMBL" id="CP001298">
    <property type="protein sequence ID" value="ACK81370.1"/>
    <property type="molecule type" value="Genomic_DNA"/>
</dbReference>
<dbReference type="RefSeq" id="WP_012605547.1">
    <property type="nucleotide sequence ID" value="NC_011757.1"/>
</dbReference>
<dbReference type="SMR" id="B7L092"/>
<dbReference type="KEGG" id="mch:Mchl_0434"/>
<dbReference type="HOGENOM" id="CLU_050858_0_0_5"/>
<dbReference type="Proteomes" id="UP000002385">
    <property type="component" value="Chromosome"/>
</dbReference>
<dbReference type="GO" id="GO:0000175">
    <property type="term" value="F:3'-5'-RNA exonuclease activity"/>
    <property type="evidence" value="ECO:0007669"/>
    <property type="project" value="UniProtKB-UniRule"/>
</dbReference>
<dbReference type="GO" id="GO:0000049">
    <property type="term" value="F:tRNA binding"/>
    <property type="evidence" value="ECO:0007669"/>
    <property type="project" value="UniProtKB-UniRule"/>
</dbReference>
<dbReference type="GO" id="GO:0009022">
    <property type="term" value="F:tRNA nucleotidyltransferase activity"/>
    <property type="evidence" value="ECO:0007669"/>
    <property type="project" value="UniProtKB-UniRule"/>
</dbReference>
<dbReference type="GO" id="GO:0016075">
    <property type="term" value="P:rRNA catabolic process"/>
    <property type="evidence" value="ECO:0007669"/>
    <property type="project" value="UniProtKB-UniRule"/>
</dbReference>
<dbReference type="GO" id="GO:0006364">
    <property type="term" value="P:rRNA processing"/>
    <property type="evidence" value="ECO:0007669"/>
    <property type="project" value="UniProtKB-KW"/>
</dbReference>
<dbReference type="GO" id="GO:0008033">
    <property type="term" value="P:tRNA processing"/>
    <property type="evidence" value="ECO:0007669"/>
    <property type="project" value="UniProtKB-UniRule"/>
</dbReference>
<dbReference type="CDD" id="cd11362">
    <property type="entry name" value="RNase_PH_bact"/>
    <property type="match status" value="1"/>
</dbReference>
<dbReference type="FunFam" id="3.30.230.70:FF:000003">
    <property type="entry name" value="Ribonuclease PH"/>
    <property type="match status" value="1"/>
</dbReference>
<dbReference type="Gene3D" id="3.30.230.70">
    <property type="entry name" value="GHMP Kinase, N-terminal domain"/>
    <property type="match status" value="1"/>
</dbReference>
<dbReference type="HAMAP" id="MF_00564">
    <property type="entry name" value="RNase_PH"/>
    <property type="match status" value="1"/>
</dbReference>
<dbReference type="InterPro" id="IPR001247">
    <property type="entry name" value="ExoRNase_PH_dom1"/>
</dbReference>
<dbReference type="InterPro" id="IPR015847">
    <property type="entry name" value="ExoRNase_PH_dom2"/>
</dbReference>
<dbReference type="InterPro" id="IPR036345">
    <property type="entry name" value="ExoRNase_PH_dom2_sf"/>
</dbReference>
<dbReference type="InterPro" id="IPR027408">
    <property type="entry name" value="PNPase/RNase_PH_dom_sf"/>
</dbReference>
<dbReference type="InterPro" id="IPR020568">
    <property type="entry name" value="Ribosomal_Su5_D2-typ_SF"/>
</dbReference>
<dbReference type="InterPro" id="IPR050080">
    <property type="entry name" value="RNase_PH"/>
</dbReference>
<dbReference type="InterPro" id="IPR002381">
    <property type="entry name" value="RNase_PH_bac-type"/>
</dbReference>
<dbReference type="InterPro" id="IPR018336">
    <property type="entry name" value="RNase_PH_CS"/>
</dbReference>
<dbReference type="NCBIfam" id="TIGR01966">
    <property type="entry name" value="RNasePH"/>
    <property type="match status" value="1"/>
</dbReference>
<dbReference type="PANTHER" id="PTHR11953">
    <property type="entry name" value="EXOSOME COMPLEX COMPONENT"/>
    <property type="match status" value="1"/>
</dbReference>
<dbReference type="PANTHER" id="PTHR11953:SF0">
    <property type="entry name" value="EXOSOME COMPLEX COMPONENT RRP41"/>
    <property type="match status" value="1"/>
</dbReference>
<dbReference type="Pfam" id="PF01138">
    <property type="entry name" value="RNase_PH"/>
    <property type="match status" value="1"/>
</dbReference>
<dbReference type="Pfam" id="PF03725">
    <property type="entry name" value="RNase_PH_C"/>
    <property type="match status" value="1"/>
</dbReference>
<dbReference type="SUPFAM" id="SSF55666">
    <property type="entry name" value="Ribonuclease PH domain 2-like"/>
    <property type="match status" value="1"/>
</dbReference>
<dbReference type="SUPFAM" id="SSF54211">
    <property type="entry name" value="Ribosomal protein S5 domain 2-like"/>
    <property type="match status" value="1"/>
</dbReference>
<dbReference type="PROSITE" id="PS01277">
    <property type="entry name" value="RIBONUCLEASE_PH"/>
    <property type="match status" value="1"/>
</dbReference>
<gene>
    <name evidence="1" type="primary">rph</name>
    <name type="ordered locus">Mchl_0434</name>
</gene>